<accession>B1XS06</accession>
<keyword id="KW-0004">4Fe-4S</keyword>
<keyword id="KW-0963">Cytoplasm</keyword>
<keyword id="KW-0408">Iron</keyword>
<keyword id="KW-0411">Iron-sulfur</keyword>
<keyword id="KW-0479">Metal-binding</keyword>
<keyword id="KW-0949">S-adenosyl-L-methionine</keyword>
<keyword id="KW-0808">Transferase</keyword>
<keyword id="KW-0819">tRNA processing</keyword>
<sequence>MKKLYIKTFGCQMNEYDSGKMADLLHADEGMVMTDRPEDADVVLLNTCSIREKAEDKVFSDLGRLRELKKTKPNLLIGVGGCVASQEGQQIVSHAPYVDVVFGPQTLHRLSDLIAKRRETGLFQVDISFPEIEKFDHLPASRQTRGSAYVSIMEGCSKYCSYCVVPYTRGEEVSRSFDDVLTEVAGLASKGVKEIVLLGQNVNAYLGKMGDRQEIADFALLIEYIVEIPGVERIRFTTSHPKEFTQRLIDVYTKVPKLVSHLHLPVQHGSDAMLSAMKRGYTALEFKSIIRKMRAVRPDLTLSSDFIVGFPGETEADFEKLLKMVEELNFDNSFCFIFSPRPGTPAANLHDDTPYEVKLKRLQTLLALVESQANQISQKMLGNIERVLIEGLAKDGINLQGRAENNRVIHFTAPAQNIENLIGQMVDIRITEVLNYTLRGKLVEAYVH</sequence>
<reference key="1">
    <citation type="journal article" date="2013" name="Proc. Natl. Acad. Sci. U.S.A.">
        <title>Polynucleobacter necessarius, a model for genome reduction in both free-living and symbiotic bacteria.</title>
        <authorList>
            <person name="Boscaro V."/>
            <person name="Felletti M."/>
            <person name="Vannini C."/>
            <person name="Ackerman M.S."/>
            <person name="Chain P.S."/>
            <person name="Malfatti S."/>
            <person name="Vergez L.M."/>
            <person name="Shin M."/>
            <person name="Doak T.G."/>
            <person name="Lynch M."/>
            <person name="Petroni G."/>
        </authorList>
    </citation>
    <scope>NUCLEOTIDE SEQUENCE [LARGE SCALE GENOMIC DNA]</scope>
    <source>
        <strain>STIR1</strain>
    </source>
</reference>
<proteinExistence type="inferred from homology"/>
<name>MIAB_POLNS</name>
<comment type="function">
    <text evidence="1">Catalyzes the methylthiolation of N6-(dimethylallyl)adenosine (i(6)A), leading to the formation of 2-methylthio-N6-(dimethylallyl)adenosine (ms(2)i(6)A) at position 37 in tRNAs that read codons beginning with uridine.</text>
</comment>
<comment type="catalytic activity">
    <reaction evidence="1">
        <text>N(6)-dimethylallyladenosine(37) in tRNA + (sulfur carrier)-SH + AH2 + 2 S-adenosyl-L-methionine = 2-methylsulfanyl-N(6)-dimethylallyladenosine(37) in tRNA + (sulfur carrier)-H + 5'-deoxyadenosine + L-methionine + A + S-adenosyl-L-homocysteine + 2 H(+)</text>
        <dbReference type="Rhea" id="RHEA:37067"/>
        <dbReference type="Rhea" id="RHEA-COMP:10375"/>
        <dbReference type="Rhea" id="RHEA-COMP:10376"/>
        <dbReference type="Rhea" id="RHEA-COMP:14737"/>
        <dbReference type="Rhea" id="RHEA-COMP:14739"/>
        <dbReference type="ChEBI" id="CHEBI:13193"/>
        <dbReference type="ChEBI" id="CHEBI:15378"/>
        <dbReference type="ChEBI" id="CHEBI:17319"/>
        <dbReference type="ChEBI" id="CHEBI:17499"/>
        <dbReference type="ChEBI" id="CHEBI:29917"/>
        <dbReference type="ChEBI" id="CHEBI:57844"/>
        <dbReference type="ChEBI" id="CHEBI:57856"/>
        <dbReference type="ChEBI" id="CHEBI:59789"/>
        <dbReference type="ChEBI" id="CHEBI:64428"/>
        <dbReference type="ChEBI" id="CHEBI:74415"/>
        <dbReference type="ChEBI" id="CHEBI:74417"/>
        <dbReference type="EC" id="2.8.4.3"/>
    </reaction>
</comment>
<comment type="cofactor">
    <cofactor evidence="1">
        <name>[4Fe-4S] cluster</name>
        <dbReference type="ChEBI" id="CHEBI:49883"/>
    </cofactor>
    <text evidence="1">Binds 2 [4Fe-4S] clusters. One cluster is coordinated with 3 cysteines and an exchangeable S-adenosyl-L-methionine.</text>
</comment>
<comment type="subunit">
    <text evidence="1">Monomer.</text>
</comment>
<comment type="subcellular location">
    <subcellularLocation>
        <location evidence="1">Cytoplasm</location>
    </subcellularLocation>
</comment>
<comment type="similarity">
    <text evidence="1">Belongs to the methylthiotransferase family. MiaB subfamily.</text>
</comment>
<organism>
    <name type="scientific">Polynucleobacter necessarius subsp. necessarius (strain STIR1)</name>
    <dbReference type="NCBI Taxonomy" id="452638"/>
    <lineage>
        <taxon>Bacteria</taxon>
        <taxon>Pseudomonadati</taxon>
        <taxon>Pseudomonadota</taxon>
        <taxon>Betaproteobacteria</taxon>
        <taxon>Burkholderiales</taxon>
        <taxon>Burkholderiaceae</taxon>
        <taxon>Polynucleobacter</taxon>
    </lineage>
</organism>
<feature type="chain" id="PRO_0000374439" description="tRNA-2-methylthio-N(6)-dimethylallyladenosine synthase">
    <location>
        <begin position="1"/>
        <end position="448"/>
    </location>
</feature>
<feature type="domain" description="MTTase N-terminal" evidence="1">
    <location>
        <begin position="2"/>
        <end position="119"/>
    </location>
</feature>
<feature type="domain" description="Radical SAM core" evidence="2">
    <location>
        <begin position="142"/>
        <end position="377"/>
    </location>
</feature>
<feature type="domain" description="TRAM" evidence="1">
    <location>
        <begin position="378"/>
        <end position="444"/>
    </location>
</feature>
<feature type="binding site" evidence="1">
    <location>
        <position position="11"/>
    </location>
    <ligand>
        <name>[4Fe-4S] cluster</name>
        <dbReference type="ChEBI" id="CHEBI:49883"/>
        <label>1</label>
    </ligand>
</feature>
<feature type="binding site" evidence="1">
    <location>
        <position position="48"/>
    </location>
    <ligand>
        <name>[4Fe-4S] cluster</name>
        <dbReference type="ChEBI" id="CHEBI:49883"/>
        <label>1</label>
    </ligand>
</feature>
<feature type="binding site" evidence="1">
    <location>
        <position position="82"/>
    </location>
    <ligand>
        <name>[4Fe-4S] cluster</name>
        <dbReference type="ChEBI" id="CHEBI:49883"/>
        <label>1</label>
    </ligand>
</feature>
<feature type="binding site" evidence="1">
    <location>
        <position position="156"/>
    </location>
    <ligand>
        <name>[4Fe-4S] cluster</name>
        <dbReference type="ChEBI" id="CHEBI:49883"/>
        <label>2</label>
        <note>4Fe-4S-S-AdoMet</note>
    </ligand>
</feature>
<feature type="binding site" evidence="1">
    <location>
        <position position="160"/>
    </location>
    <ligand>
        <name>[4Fe-4S] cluster</name>
        <dbReference type="ChEBI" id="CHEBI:49883"/>
        <label>2</label>
        <note>4Fe-4S-S-AdoMet</note>
    </ligand>
</feature>
<feature type="binding site" evidence="1">
    <location>
        <position position="163"/>
    </location>
    <ligand>
        <name>[4Fe-4S] cluster</name>
        <dbReference type="ChEBI" id="CHEBI:49883"/>
        <label>2</label>
        <note>4Fe-4S-S-AdoMet</note>
    </ligand>
</feature>
<evidence type="ECO:0000255" key="1">
    <source>
        <dbReference type="HAMAP-Rule" id="MF_01864"/>
    </source>
</evidence>
<evidence type="ECO:0000255" key="2">
    <source>
        <dbReference type="PROSITE-ProRule" id="PRU01266"/>
    </source>
</evidence>
<dbReference type="EC" id="2.8.4.3" evidence="1"/>
<dbReference type="EMBL" id="CP001010">
    <property type="protein sequence ID" value="ACB44641.1"/>
    <property type="molecule type" value="Genomic_DNA"/>
</dbReference>
<dbReference type="SMR" id="B1XS06"/>
<dbReference type="STRING" id="452638.Pnec_1563"/>
<dbReference type="KEGG" id="pne:Pnec_1563"/>
<dbReference type="eggNOG" id="COG0621">
    <property type="taxonomic scope" value="Bacteria"/>
</dbReference>
<dbReference type="HOGENOM" id="CLU_018697_2_0_4"/>
<dbReference type="OrthoDB" id="9805215at2"/>
<dbReference type="GO" id="GO:0005829">
    <property type="term" value="C:cytosol"/>
    <property type="evidence" value="ECO:0007669"/>
    <property type="project" value="TreeGrafter"/>
</dbReference>
<dbReference type="GO" id="GO:0051539">
    <property type="term" value="F:4 iron, 4 sulfur cluster binding"/>
    <property type="evidence" value="ECO:0007669"/>
    <property type="project" value="UniProtKB-UniRule"/>
</dbReference>
<dbReference type="GO" id="GO:0046872">
    <property type="term" value="F:metal ion binding"/>
    <property type="evidence" value="ECO:0007669"/>
    <property type="project" value="UniProtKB-KW"/>
</dbReference>
<dbReference type="GO" id="GO:0035597">
    <property type="term" value="F:N6-isopentenyladenosine methylthiotransferase activity"/>
    <property type="evidence" value="ECO:0007669"/>
    <property type="project" value="TreeGrafter"/>
</dbReference>
<dbReference type="CDD" id="cd01335">
    <property type="entry name" value="Radical_SAM"/>
    <property type="match status" value="1"/>
</dbReference>
<dbReference type="FunFam" id="3.40.50.12160:FF:000001">
    <property type="entry name" value="tRNA-2-methylthio-N(6)-dimethylallyladenosine synthase"/>
    <property type="match status" value="1"/>
</dbReference>
<dbReference type="FunFam" id="3.80.30.20:FF:000001">
    <property type="entry name" value="tRNA-2-methylthio-N(6)-dimethylallyladenosine synthase 2"/>
    <property type="match status" value="1"/>
</dbReference>
<dbReference type="Gene3D" id="3.40.50.12160">
    <property type="entry name" value="Methylthiotransferase, N-terminal domain"/>
    <property type="match status" value="1"/>
</dbReference>
<dbReference type="Gene3D" id="3.80.30.20">
    <property type="entry name" value="tm_1862 like domain"/>
    <property type="match status" value="1"/>
</dbReference>
<dbReference type="HAMAP" id="MF_01864">
    <property type="entry name" value="tRNA_metthiotr_MiaB"/>
    <property type="match status" value="1"/>
</dbReference>
<dbReference type="InterPro" id="IPR006638">
    <property type="entry name" value="Elp3/MiaA/NifB-like_rSAM"/>
</dbReference>
<dbReference type="InterPro" id="IPR005839">
    <property type="entry name" value="Methylthiotransferase"/>
</dbReference>
<dbReference type="InterPro" id="IPR020612">
    <property type="entry name" value="Methylthiotransferase_CS"/>
</dbReference>
<dbReference type="InterPro" id="IPR013848">
    <property type="entry name" value="Methylthiotransferase_N"/>
</dbReference>
<dbReference type="InterPro" id="IPR038135">
    <property type="entry name" value="Methylthiotransferase_N_sf"/>
</dbReference>
<dbReference type="InterPro" id="IPR006463">
    <property type="entry name" value="MiaB_methiolase"/>
</dbReference>
<dbReference type="InterPro" id="IPR007197">
    <property type="entry name" value="rSAM"/>
</dbReference>
<dbReference type="InterPro" id="IPR023404">
    <property type="entry name" value="rSAM_horseshoe"/>
</dbReference>
<dbReference type="InterPro" id="IPR002792">
    <property type="entry name" value="TRAM_dom"/>
</dbReference>
<dbReference type="NCBIfam" id="TIGR01574">
    <property type="entry name" value="miaB-methiolase"/>
    <property type="match status" value="1"/>
</dbReference>
<dbReference type="NCBIfam" id="TIGR00089">
    <property type="entry name" value="MiaB/RimO family radical SAM methylthiotransferase"/>
    <property type="match status" value="1"/>
</dbReference>
<dbReference type="PANTHER" id="PTHR43020">
    <property type="entry name" value="CDK5 REGULATORY SUBUNIT-ASSOCIATED PROTEIN 1"/>
    <property type="match status" value="1"/>
</dbReference>
<dbReference type="PANTHER" id="PTHR43020:SF2">
    <property type="entry name" value="MITOCHONDRIAL TRNA METHYLTHIOTRANSFERASE CDK5RAP1"/>
    <property type="match status" value="1"/>
</dbReference>
<dbReference type="Pfam" id="PF04055">
    <property type="entry name" value="Radical_SAM"/>
    <property type="match status" value="1"/>
</dbReference>
<dbReference type="Pfam" id="PF01938">
    <property type="entry name" value="TRAM"/>
    <property type="match status" value="1"/>
</dbReference>
<dbReference type="Pfam" id="PF00919">
    <property type="entry name" value="UPF0004"/>
    <property type="match status" value="1"/>
</dbReference>
<dbReference type="SFLD" id="SFLDF00273">
    <property type="entry name" value="(dimethylallyl)adenosine_tRNA"/>
    <property type="match status" value="1"/>
</dbReference>
<dbReference type="SFLD" id="SFLDG01082">
    <property type="entry name" value="B12-binding_domain_containing"/>
    <property type="match status" value="1"/>
</dbReference>
<dbReference type="SFLD" id="SFLDG01061">
    <property type="entry name" value="methylthiotransferase"/>
    <property type="match status" value="1"/>
</dbReference>
<dbReference type="SMART" id="SM00729">
    <property type="entry name" value="Elp3"/>
    <property type="match status" value="1"/>
</dbReference>
<dbReference type="SUPFAM" id="SSF102114">
    <property type="entry name" value="Radical SAM enzymes"/>
    <property type="match status" value="1"/>
</dbReference>
<dbReference type="PROSITE" id="PS51449">
    <property type="entry name" value="MTTASE_N"/>
    <property type="match status" value="1"/>
</dbReference>
<dbReference type="PROSITE" id="PS01278">
    <property type="entry name" value="MTTASE_RADICAL"/>
    <property type="match status" value="1"/>
</dbReference>
<dbReference type="PROSITE" id="PS51918">
    <property type="entry name" value="RADICAL_SAM"/>
    <property type="match status" value="1"/>
</dbReference>
<dbReference type="PROSITE" id="PS50926">
    <property type="entry name" value="TRAM"/>
    <property type="match status" value="1"/>
</dbReference>
<gene>
    <name evidence="1" type="primary">miaB</name>
    <name type="ordered locus">Pnec_1563</name>
</gene>
<protein>
    <recommendedName>
        <fullName evidence="1">tRNA-2-methylthio-N(6)-dimethylallyladenosine synthase</fullName>
        <ecNumber evidence="1">2.8.4.3</ecNumber>
    </recommendedName>
    <alternativeName>
        <fullName evidence="1">(Dimethylallyl)adenosine tRNA methylthiotransferase MiaB</fullName>
    </alternativeName>
    <alternativeName>
        <fullName evidence="1">tRNA-i(6)A37 methylthiotransferase</fullName>
    </alternativeName>
</protein>